<proteinExistence type="inferred from homology"/>
<comment type="function">
    <text evidence="1">Essential cell division protein. May link together the upstream cell division proteins, which are predominantly cytoplasmic, with the downstream cell division proteins, which are predominantly periplasmic.</text>
</comment>
<comment type="subunit">
    <text evidence="1">Part of a complex composed of FtsB, FtsL and FtsQ.</text>
</comment>
<comment type="subcellular location">
    <subcellularLocation>
        <location evidence="1">Cell inner membrane</location>
        <topology evidence="1">Single-pass type II membrane protein</topology>
    </subcellularLocation>
    <text evidence="1">Localizes to the division septum.</text>
</comment>
<comment type="similarity">
    <text evidence="1">Belongs to the FtsB family.</text>
</comment>
<dbReference type="EMBL" id="AE004969">
    <property type="protein sequence ID" value="AAW89344.1"/>
    <property type="molecule type" value="Genomic_DNA"/>
</dbReference>
<dbReference type="RefSeq" id="WP_002213385.1">
    <property type="nucleotide sequence ID" value="NC_002946.2"/>
</dbReference>
<dbReference type="RefSeq" id="YP_207756.1">
    <property type="nucleotide sequence ID" value="NC_002946.2"/>
</dbReference>
<dbReference type="SMR" id="Q5F8Z3"/>
<dbReference type="STRING" id="242231.NGO_0616"/>
<dbReference type="GeneID" id="93385912"/>
<dbReference type="KEGG" id="ngo:NGO_0616"/>
<dbReference type="PATRIC" id="fig|242231.10.peg.730"/>
<dbReference type="HOGENOM" id="CLU_134863_5_2_4"/>
<dbReference type="Proteomes" id="UP000000535">
    <property type="component" value="Chromosome"/>
</dbReference>
<dbReference type="GO" id="GO:0032153">
    <property type="term" value="C:cell division site"/>
    <property type="evidence" value="ECO:0007669"/>
    <property type="project" value="UniProtKB-UniRule"/>
</dbReference>
<dbReference type="GO" id="GO:0030428">
    <property type="term" value="C:cell septum"/>
    <property type="evidence" value="ECO:0007669"/>
    <property type="project" value="TreeGrafter"/>
</dbReference>
<dbReference type="GO" id="GO:0005886">
    <property type="term" value="C:plasma membrane"/>
    <property type="evidence" value="ECO:0007669"/>
    <property type="project" value="UniProtKB-SubCell"/>
</dbReference>
<dbReference type="GO" id="GO:0043093">
    <property type="term" value="P:FtsZ-dependent cytokinesis"/>
    <property type="evidence" value="ECO:0007669"/>
    <property type="project" value="UniProtKB-UniRule"/>
</dbReference>
<dbReference type="HAMAP" id="MF_00599">
    <property type="entry name" value="FtsB"/>
    <property type="match status" value="1"/>
</dbReference>
<dbReference type="InterPro" id="IPR023081">
    <property type="entry name" value="Cell_div_FtsB"/>
</dbReference>
<dbReference type="InterPro" id="IPR007060">
    <property type="entry name" value="FtsL/DivIC"/>
</dbReference>
<dbReference type="NCBIfam" id="NF002058">
    <property type="entry name" value="PRK00888.1"/>
    <property type="match status" value="1"/>
</dbReference>
<dbReference type="PANTHER" id="PTHR37485">
    <property type="entry name" value="CELL DIVISION PROTEIN FTSB"/>
    <property type="match status" value="1"/>
</dbReference>
<dbReference type="PANTHER" id="PTHR37485:SF1">
    <property type="entry name" value="CELL DIVISION PROTEIN FTSB"/>
    <property type="match status" value="1"/>
</dbReference>
<dbReference type="Pfam" id="PF04977">
    <property type="entry name" value="DivIC"/>
    <property type="match status" value="1"/>
</dbReference>
<gene>
    <name evidence="1" type="primary">ftsB</name>
    <name type="ordered locus">NGO_0616</name>
</gene>
<sequence length="92" mass="10563">MKWVTVVLSFALVCCQYSLWFGKGSIGRNSSLREQIAVQEEKNQTLALRNHSLAAEVYDLENGQEAISEIARVELGYIQDGETFYRLIRHNR</sequence>
<keyword id="KW-0131">Cell cycle</keyword>
<keyword id="KW-0132">Cell division</keyword>
<keyword id="KW-0997">Cell inner membrane</keyword>
<keyword id="KW-1003">Cell membrane</keyword>
<keyword id="KW-0175">Coiled coil</keyword>
<keyword id="KW-0472">Membrane</keyword>
<keyword id="KW-1185">Reference proteome</keyword>
<keyword id="KW-0812">Transmembrane</keyword>
<keyword id="KW-1133">Transmembrane helix</keyword>
<reference key="1">
    <citation type="submission" date="2003-03" db="EMBL/GenBank/DDBJ databases">
        <title>The complete genome sequence of Neisseria gonorrhoeae.</title>
        <authorList>
            <person name="Lewis L.A."/>
            <person name="Gillaspy A.F."/>
            <person name="McLaughlin R.E."/>
            <person name="Gipson M."/>
            <person name="Ducey T.F."/>
            <person name="Ownbey T."/>
            <person name="Hartman K."/>
            <person name="Nydick C."/>
            <person name="Carson M.B."/>
            <person name="Vaughn J."/>
            <person name="Thomson C."/>
            <person name="Song L."/>
            <person name="Lin S."/>
            <person name="Yuan X."/>
            <person name="Najar F."/>
            <person name="Zhan M."/>
            <person name="Ren Q."/>
            <person name="Zhu H."/>
            <person name="Qi S."/>
            <person name="Kenton S.M."/>
            <person name="Lai H."/>
            <person name="White J.D."/>
            <person name="Clifton S."/>
            <person name="Roe B.A."/>
            <person name="Dyer D.W."/>
        </authorList>
    </citation>
    <scope>NUCLEOTIDE SEQUENCE [LARGE SCALE GENOMIC DNA]</scope>
    <source>
        <strain>ATCC 700825 / FA 1090</strain>
    </source>
</reference>
<accession>Q5F8Z3</accession>
<organism>
    <name type="scientific">Neisseria gonorrhoeae (strain ATCC 700825 / FA 1090)</name>
    <dbReference type="NCBI Taxonomy" id="242231"/>
    <lineage>
        <taxon>Bacteria</taxon>
        <taxon>Pseudomonadati</taxon>
        <taxon>Pseudomonadota</taxon>
        <taxon>Betaproteobacteria</taxon>
        <taxon>Neisseriales</taxon>
        <taxon>Neisseriaceae</taxon>
        <taxon>Neisseria</taxon>
    </lineage>
</organism>
<feature type="chain" id="PRO_1000025709" description="Cell division protein FtsB">
    <location>
        <begin position="1"/>
        <end position="92"/>
    </location>
</feature>
<feature type="topological domain" description="Cytoplasmic" evidence="1">
    <location>
        <begin position="1"/>
        <end position="3"/>
    </location>
</feature>
<feature type="transmembrane region" description="Helical" evidence="1">
    <location>
        <begin position="4"/>
        <end position="21"/>
    </location>
</feature>
<feature type="topological domain" description="Periplasmic" evidence="1">
    <location>
        <begin position="22"/>
        <end position="92"/>
    </location>
</feature>
<feature type="coiled-coil region" evidence="1">
    <location>
        <begin position="28"/>
        <end position="50"/>
    </location>
</feature>
<protein>
    <recommendedName>
        <fullName evidence="1">Cell division protein FtsB</fullName>
    </recommendedName>
</protein>
<name>FTSB_NEIG1</name>
<evidence type="ECO:0000255" key="1">
    <source>
        <dbReference type="HAMAP-Rule" id="MF_00599"/>
    </source>
</evidence>